<gene>
    <name evidence="1" type="primary">rpsF</name>
    <name type="ordered locus">SPAB_05526</name>
</gene>
<accession>A9N518</accession>
<name>RS6_SALPB</name>
<evidence type="ECO:0000255" key="1">
    <source>
        <dbReference type="HAMAP-Rule" id="MF_00360"/>
    </source>
</evidence>
<evidence type="ECO:0000256" key="2">
    <source>
        <dbReference type="SAM" id="MobiDB-lite"/>
    </source>
</evidence>
<evidence type="ECO:0000305" key="3"/>
<sequence>MRHYEIVFMVHPDQSEQVPGMIERYSAAITGAEGKIHRLEDWGRRQLAYPINKLHKAHYVLMNVEAPQEVIDELETTFRFNDAVIRSMVMRTKHAVTEASPMVKAKDERRERRDDFANETADDAEAGDSEE</sequence>
<proteinExistence type="inferred from homology"/>
<comment type="function">
    <text evidence="1">Binds together with bS18 to 16S ribosomal RNA.</text>
</comment>
<comment type="similarity">
    <text evidence="1">Belongs to the bacterial ribosomal protein bS6 family.</text>
</comment>
<dbReference type="EMBL" id="CP000886">
    <property type="protein sequence ID" value="ABX70795.1"/>
    <property type="molecule type" value="Genomic_DNA"/>
</dbReference>
<dbReference type="RefSeq" id="WP_001216673.1">
    <property type="nucleotide sequence ID" value="NC_010102.1"/>
</dbReference>
<dbReference type="SMR" id="A9N518"/>
<dbReference type="GeneID" id="92804768"/>
<dbReference type="KEGG" id="spq:SPAB_05526"/>
<dbReference type="PATRIC" id="fig|1016998.12.peg.5179"/>
<dbReference type="HOGENOM" id="CLU_113441_6_1_6"/>
<dbReference type="BioCyc" id="SENT1016998:SPAB_RS22565-MONOMER"/>
<dbReference type="Proteomes" id="UP000008556">
    <property type="component" value="Chromosome"/>
</dbReference>
<dbReference type="GO" id="GO:0022627">
    <property type="term" value="C:cytosolic small ribosomal subunit"/>
    <property type="evidence" value="ECO:0007669"/>
    <property type="project" value="TreeGrafter"/>
</dbReference>
<dbReference type="GO" id="GO:0070181">
    <property type="term" value="F:small ribosomal subunit rRNA binding"/>
    <property type="evidence" value="ECO:0007669"/>
    <property type="project" value="TreeGrafter"/>
</dbReference>
<dbReference type="GO" id="GO:0003735">
    <property type="term" value="F:structural constituent of ribosome"/>
    <property type="evidence" value="ECO:0007669"/>
    <property type="project" value="InterPro"/>
</dbReference>
<dbReference type="GO" id="GO:0006412">
    <property type="term" value="P:translation"/>
    <property type="evidence" value="ECO:0007669"/>
    <property type="project" value="UniProtKB-UniRule"/>
</dbReference>
<dbReference type="CDD" id="cd00473">
    <property type="entry name" value="bS6"/>
    <property type="match status" value="1"/>
</dbReference>
<dbReference type="FunFam" id="3.30.70.60:FF:000003">
    <property type="entry name" value="30S ribosomal protein S6"/>
    <property type="match status" value="1"/>
</dbReference>
<dbReference type="Gene3D" id="3.30.70.60">
    <property type="match status" value="1"/>
</dbReference>
<dbReference type="HAMAP" id="MF_00360">
    <property type="entry name" value="Ribosomal_bS6"/>
    <property type="match status" value="1"/>
</dbReference>
<dbReference type="InterPro" id="IPR000529">
    <property type="entry name" value="Ribosomal_bS6"/>
</dbReference>
<dbReference type="InterPro" id="IPR020815">
    <property type="entry name" value="Ribosomal_bS6_CS"/>
</dbReference>
<dbReference type="InterPro" id="IPR035980">
    <property type="entry name" value="Ribosomal_bS6_sf"/>
</dbReference>
<dbReference type="InterPro" id="IPR020814">
    <property type="entry name" value="Ribosomal_S6_plastid/chlpt"/>
</dbReference>
<dbReference type="InterPro" id="IPR014717">
    <property type="entry name" value="Transl_elong_EF1B/ribsomal_bS6"/>
</dbReference>
<dbReference type="NCBIfam" id="TIGR00166">
    <property type="entry name" value="S6"/>
    <property type="match status" value="1"/>
</dbReference>
<dbReference type="PANTHER" id="PTHR21011">
    <property type="entry name" value="MITOCHONDRIAL 28S RIBOSOMAL PROTEIN S6"/>
    <property type="match status" value="1"/>
</dbReference>
<dbReference type="PANTHER" id="PTHR21011:SF1">
    <property type="entry name" value="SMALL RIBOSOMAL SUBUNIT PROTEIN BS6M"/>
    <property type="match status" value="1"/>
</dbReference>
<dbReference type="Pfam" id="PF01250">
    <property type="entry name" value="Ribosomal_S6"/>
    <property type="match status" value="1"/>
</dbReference>
<dbReference type="SUPFAM" id="SSF54995">
    <property type="entry name" value="Ribosomal protein S6"/>
    <property type="match status" value="1"/>
</dbReference>
<dbReference type="PROSITE" id="PS01048">
    <property type="entry name" value="RIBOSOMAL_S6"/>
    <property type="match status" value="1"/>
</dbReference>
<organism>
    <name type="scientific">Salmonella paratyphi B (strain ATCC BAA-1250 / SPB7)</name>
    <dbReference type="NCBI Taxonomy" id="1016998"/>
    <lineage>
        <taxon>Bacteria</taxon>
        <taxon>Pseudomonadati</taxon>
        <taxon>Pseudomonadota</taxon>
        <taxon>Gammaproteobacteria</taxon>
        <taxon>Enterobacterales</taxon>
        <taxon>Enterobacteriaceae</taxon>
        <taxon>Salmonella</taxon>
    </lineage>
</organism>
<feature type="chain" id="PRO_1000079463" description="Small ribosomal subunit protein bS6">
    <location>
        <begin position="1"/>
        <end position="131"/>
    </location>
</feature>
<feature type="region of interest" description="Disordered" evidence="2">
    <location>
        <begin position="98"/>
        <end position="131"/>
    </location>
</feature>
<feature type="compositionally biased region" description="Basic and acidic residues" evidence="2">
    <location>
        <begin position="104"/>
        <end position="116"/>
    </location>
</feature>
<feature type="compositionally biased region" description="Acidic residues" evidence="2">
    <location>
        <begin position="120"/>
        <end position="131"/>
    </location>
</feature>
<protein>
    <recommendedName>
        <fullName evidence="1">Small ribosomal subunit protein bS6</fullName>
    </recommendedName>
    <alternativeName>
        <fullName evidence="3">30S ribosomal protein S6</fullName>
    </alternativeName>
</protein>
<reference key="1">
    <citation type="submission" date="2007-11" db="EMBL/GenBank/DDBJ databases">
        <authorList>
            <consortium name="The Salmonella enterica serovar Paratyphi B Genome Sequencing Project"/>
            <person name="McClelland M."/>
            <person name="Sanderson E.K."/>
            <person name="Porwollik S."/>
            <person name="Spieth J."/>
            <person name="Clifton W.S."/>
            <person name="Fulton R."/>
            <person name="Cordes M."/>
            <person name="Wollam A."/>
            <person name="Shah N."/>
            <person name="Pepin K."/>
            <person name="Bhonagiri V."/>
            <person name="Nash W."/>
            <person name="Johnson M."/>
            <person name="Thiruvilangam P."/>
            <person name="Wilson R."/>
        </authorList>
    </citation>
    <scope>NUCLEOTIDE SEQUENCE [LARGE SCALE GENOMIC DNA]</scope>
    <source>
        <strain>ATCC BAA-1250 / SPB7</strain>
    </source>
</reference>
<keyword id="KW-0687">Ribonucleoprotein</keyword>
<keyword id="KW-0689">Ribosomal protein</keyword>
<keyword id="KW-0694">RNA-binding</keyword>
<keyword id="KW-0699">rRNA-binding</keyword>